<organism>
    <name type="scientific">Acidianus filamentous virus 2 (isolate Italy/Pozzuoli)</name>
    <name type="common">AFV-2</name>
    <dbReference type="NCBI Taxonomy" id="654910"/>
    <lineage>
        <taxon>Viruses</taxon>
        <taxon>Adnaviria</taxon>
        <taxon>Zilligvirae</taxon>
        <taxon>Taleaviricota</taxon>
        <taxon>Tokiviricetes</taxon>
        <taxon>Ligamenvirales</taxon>
        <taxon>Lipothrixviridae</taxon>
        <taxon>Deltalipothrixvirus</taxon>
        <taxon>Acidianus filamentous virus 2</taxon>
    </lineage>
</organism>
<dbReference type="EMBL" id="AJ854042">
    <property type="protein sequence ID" value="CAH69389.1"/>
    <property type="molecule type" value="Genomic_DNA"/>
</dbReference>
<dbReference type="RefSeq" id="YP_001496927.1">
    <property type="nucleotide sequence ID" value="NC_009884.1"/>
</dbReference>
<dbReference type="KEGG" id="vg:5656090"/>
<dbReference type="Proteomes" id="UP000006364">
    <property type="component" value="Genome"/>
</dbReference>
<feature type="chain" id="PRO_0000384529" description="Uncharacterized protein ORF345">
    <location>
        <begin position="1"/>
        <end position="345"/>
    </location>
</feature>
<organismHost>
    <name type="scientific">Acidianus sp. F28</name>
    <dbReference type="NCBI Taxonomy" id="315458"/>
</organismHost>
<protein>
    <recommendedName>
        <fullName>Uncharacterized protein ORF345</fullName>
    </recommendedName>
</protein>
<sequence>MKKMKGEKKAKREGYILLQEIPKLEYIFKNWNEFEDNFYVAEYNYNLKDFKFYMRKYITGIMRIWIYNYEIVMKRKGDEIEITLDDAKKIQCWDLMKILDQVFYPVMRFYQNTIEIEIVNNDVTYYIPIRPKEFKISLKLTENENEIKNAIANTKIKIDGKTLVIKKVGNKGKKYFMRRILRIPIYAKMMLKYRKITHVFAKMMLKKGILEQGEFRIMPLLKLEKLLYKKMNFRDIKYMKYFTMPIYRFNRDRVNLQGISYIDNFIITDYYYDGVNQIVFKLIAVDTRDPIVTTEKEVLATTLCGIDYKNNLWCVSISNLMLYWKISAVYKFMYDLDDRTKVFEY</sequence>
<keyword id="KW-1185">Reference proteome</keyword>
<gene>
    <name type="ORF">ORF345</name>
</gene>
<reference key="1">
    <citation type="journal article" date="2005" name="J. Bacteriol.">
        <title>Structure and genome organization of AFV2, a novel archaeal lipothrixvirus with unusual terminal and core structures.</title>
        <authorList>
            <person name="Haring M."/>
            <person name="Vestergaard G."/>
            <person name="Brugger K."/>
            <person name="Rachel R."/>
            <person name="Garrett R.A."/>
            <person name="Prangishvili D."/>
        </authorList>
    </citation>
    <scope>NUCLEOTIDE SEQUENCE [GENOMIC DNA]</scope>
</reference>
<accession>Q573G7</accession>
<name>Y345_AFV2P</name>
<proteinExistence type="predicted"/>